<organism>
    <name type="scientific">Leptospira biflexa serovar Patoc (strain Patoc 1 / ATCC 23582 / Paris)</name>
    <dbReference type="NCBI Taxonomy" id="456481"/>
    <lineage>
        <taxon>Bacteria</taxon>
        <taxon>Pseudomonadati</taxon>
        <taxon>Spirochaetota</taxon>
        <taxon>Spirochaetia</taxon>
        <taxon>Leptospirales</taxon>
        <taxon>Leptospiraceae</taxon>
        <taxon>Leptospira</taxon>
    </lineage>
</organism>
<accession>B0SRZ9</accession>
<proteinExistence type="inferred from homology"/>
<keyword id="KW-0963">Cytoplasm</keyword>
<keyword id="KW-0489">Methyltransferase</keyword>
<keyword id="KW-1185">Reference proteome</keyword>
<keyword id="KW-0698">rRNA processing</keyword>
<keyword id="KW-0949">S-adenosyl-L-methionine</keyword>
<keyword id="KW-0808">Transferase</keyword>
<dbReference type="EC" id="2.1.1.-" evidence="1"/>
<dbReference type="EMBL" id="CP000786">
    <property type="protein sequence ID" value="ABZ99534.1"/>
    <property type="molecule type" value="Genomic_DNA"/>
</dbReference>
<dbReference type="RefSeq" id="WP_012390390.1">
    <property type="nucleotide sequence ID" value="NC_010602.1"/>
</dbReference>
<dbReference type="SMR" id="B0SRZ9"/>
<dbReference type="STRING" id="456481.LEPBI_I3475"/>
<dbReference type="KEGG" id="lbi:LEPBI_I3475"/>
<dbReference type="HOGENOM" id="CLU_1093258_0_0_12"/>
<dbReference type="OrthoDB" id="340750at2"/>
<dbReference type="BioCyc" id="LBIF456481:LEPBI_RS17050-MONOMER"/>
<dbReference type="Proteomes" id="UP000001847">
    <property type="component" value="Chromosome I"/>
</dbReference>
<dbReference type="GO" id="GO:0005829">
    <property type="term" value="C:cytosol"/>
    <property type="evidence" value="ECO:0007669"/>
    <property type="project" value="TreeGrafter"/>
</dbReference>
<dbReference type="GO" id="GO:0070043">
    <property type="term" value="F:rRNA (guanine-N7-)-methyltransferase activity"/>
    <property type="evidence" value="ECO:0007669"/>
    <property type="project" value="UniProtKB-UniRule"/>
</dbReference>
<dbReference type="Gene3D" id="3.40.50.150">
    <property type="entry name" value="Vaccinia Virus protein VP39"/>
    <property type="match status" value="1"/>
</dbReference>
<dbReference type="HAMAP" id="MF_00074">
    <property type="entry name" value="16SrRNA_methyltr_G"/>
    <property type="match status" value="1"/>
</dbReference>
<dbReference type="InterPro" id="IPR003682">
    <property type="entry name" value="rRNA_ssu_MeTfrase_G"/>
</dbReference>
<dbReference type="InterPro" id="IPR029063">
    <property type="entry name" value="SAM-dependent_MTases_sf"/>
</dbReference>
<dbReference type="PANTHER" id="PTHR31760">
    <property type="entry name" value="S-ADENOSYL-L-METHIONINE-DEPENDENT METHYLTRANSFERASES SUPERFAMILY PROTEIN"/>
    <property type="match status" value="1"/>
</dbReference>
<dbReference type="PANTHER" id="PTHR31760:SF0">
    <property type="entry name" value="S-ADENOSYL-L-METHIONINE-DEPENDENT METHYLTRANSFERASES SUPERFAMILY PROTEIN"/>
    <property type="match status" value="1"/>
</dbReference>
<dbReference type="Pfam" id="PF02527">
    <property type="entry name" value="GidB"/>
    <property type="match status" value="1"/>
</dbReference>
<dbReference type="PIRSF" id="PIRSF003078">
    <property type="entry name" value="GidB"/>
    <property type="match status" value="1"/>
</dbReference>
<dbReference type="SUPFAM" id="SSF53335">
    <property type="entry name" value="S-adenosyl-L-methionine-dependent methyltransferases"/>
    <property type="match status" value="1"/>
</dbReference>
<feature type="chain" id="PRO_1000092634" description="Ribosomal RNA small subunit methyltransferase G">
    <location>
        <begin position="1"/>
        <end position="247"/>
    </location>
</feature>
<feature type="binding site" evidence="1">
    <location>
        <position position="86"/>
    </location>
    <ligand>
        <name>S-adenosyl-L-methionine</name>
        <dbReference type="ChEBI" id="CHEBI:59789"/>
    </ligand>
</feature>
<feature type="binding site" evidence="1">
    <location>
        <position position="91"/>
    </location>
    <ligand>
        <name>S-adenosyl-L-methionine</name>
        <dbReference type="ChEBI" id="CHEBI:59789"/>
    </ligand>
</feature>
<feature type="binding site" evidence="1">
    <location>
        <position position="154"/>
    </location>
    <ligand>
        <name>S-adenosyl-L-methionine</name>
        <dbReference type="ChEBI" id="CHEBI:59789"/>
    </ligand>
</feature>
<sequence length="247" mass="28459">MPEKTIQEEIQTIIPELFPILEPEFDWELVKNFYDFLKRDNEKGGFFSKNDSEKILERHILESLIFVWKLKTTGYVSRETNVADVGTGPGLPGFLFAVLKKAPQVFLVDSQKRKLALLEAEITTGSLSKVKKRVEFIYARTEEISSNFDVVTSRAMVPYPYLAEVTTRMVKQKGILCPFLAQPYQDLEKETEVLSNNGFVLKKEILIPELEFVGKRHIKILQKNSLPKKGYPRDWKEIVKETKSKNG</sequence>
<protein>
    <recommendedName>
        <fullName evidence="1">Ribosomal RNA small subunit methyltransferase G</fullName>
        <ecNumber evidence="1">2.1.1.-</ecNumber>
    </recommendedName>
    <alternativeName>
        <fullName evidence="1">16S rRNA 7-methylguanosine methyltransferase</fullName>
        <shortName evidence="1">16S rRNA m7G methyltransferase</shortName>
    </alternativeName>
</protein>
<gene>
    <name evidence="1" type="primary">rsmG</name>
    <name type="ordered locus">LEPBI_I3475</name>
</gene>
<reference key="1">
    <citation type="journal article" date="2008" name="PLoS ONE">
        <title>Genome sequence of the saprophyte Leptospira biflexa provides insights into the evolution of Leptospira and the pathogenesis of leptospirosis.</title>
        <authorList>
            <person name="Picardeau M."/>
            <person name="Bulach D.M."/>
            <person name="Bouchier C."/>
            <person name="Zuerner R.L."/>
            <person name="Zidane N."/>
            <person name="Wilson P.J."/>
            <person name="Creno S."/>
            <person name="Kuczek E.S."/>
            <person name="Bommezzadri S."/>
            <person name="Davis J.C."/>
            <person name="McGrath A."/>
            <person name="Johnson M.J."/>
            <person name="Boursaux-Eude C."/>
            <person name="Seemann T."/>
            <person name="Rouy Z."/>
            <person name="Coppel R.L."/>
            <person name="Rood J.I."/>
            <person name="Lajus A."/>
            <person name="Davies J.K."/>
            <person name="Medigue C."/>
            <person name="Adler B."/>
        </authorList>
    </citation>
    <scope>NUCLEOTIDE SEQUENCE [LARGE SCALE GENOMIC DNA]</scope>
    <source>
        <strain>Patoc 1 / ATCC 23582 / Paris</strain>
    </source>
</reference>
<evidence type="ECO:0000255" key="1">
    <source>
        <dbReference type="HAMAP-Rule" id="MF_00074"/>
    </source>
</evidence>
<comment type="function">
    <text evidence="1">Specifically methylates the N7 position of a guanine in 16S rRNA.</text>
</comment>
<comment type="subcellular location">
    <subcellularLocation>
        <location evidence="1">Cytoplasm</location>
    </subcellularLocation>
</comment>
<comment type="similarity">
    <text evidence="1">Belongs to the methyltransferase superfamily. RNA methyltransferase RsmG family.</text>
</comment>
<name>RSMG_LEPBP</name>